<accession>A1JKQ4</accession>
<sequence>MSISISDSAAQRVSAFLNNRGKGLGLRLGVRTSGCSGMAYILEFVDEMNDDDIVFEDKGVKVIIDGKSMVYLDGTELDFVKEGLNEGFKFNNPNVSSECGCGESFNV</sequence>
<reference key="1">
    <citation type="journal article" date="2006" name="PLoS Genet.">
        <title>The complete genome sequence and comparative genome analysis of the high pathogenicity Yersinia enterocolitica strain 8081.</title>
        <authorList>
            <person name="Thomson N.R."/>
            <person name="Howard S."/>
            <person name="Wren B.W."/>
            <person name="Holden M.T.G."/>
            <person name="Crossman L."/>
            <person name="Challis G.L."/>
            <person name="Churcher C."/>
            <person name="Mungall K."/>
            <person name="Brooks K."/>
            <person name="Chillingworth T."/>
            <person name="Feltwell T."/>
            <person name="Abdellah Z."/>
            <person name="Hauser H."/>
            <person name="Jagels K."/>
            <person name="Maddison M."/>
            <person name="Moule S."/>
            <person name="Sanders M."/>
            <person name="Whitehead S."/>
            <person name="Quail M.A."/>
            <person name="Dougan G."/>
            <person name="Parkhill J."/>
            <person name="Prentice M.B."/>
        </authorList>
    </citation>
    <scope>NUCLEOTIDE SEQUENCE [LARGE SCALE GENOMIC DNA]</scope>
    <source>
        <strain>NCTC 13174 / 8081</strain>
    </source>
</reference>
<evidence type="ECO:0000255" key="1">
    <source>
        <dbReference type="HAMAP-Rule" id="MF_01429"/>
    </source>
</evidence>
<gene>
    <name evidence="1" type="primary">iscA</name>
    <name type="ordered locus">YE1059</name>
</gene>
<keyword id="KW-0408">Iron</keyword>
<keyword id="KW-0479">Metal-binding</keyword>
<proteinExistence type="inferred from homology"/>
<organism>
    <name type="scientific">Yersinia enterocolitica serotype O:8 / biotype 1B (strain NCTC 13174 / 8081)</name>
    <dbReference type="NCBI Taxonomy" id="393305"/>
    <lineage>
        <taxon>Bacteria</taxon>
        <taxon>Pseudomonadati</taxon>
        <taxon>Pseudomonadota</taxon>
        <taxon>Gammaproteobacteria</taxon>
        <taxon>Enterobacterales</taxon>
        <taxon>Yersiniaceae</taxon>
        <taxon>Yersinia</taxon>
    </lineage>
</organism>
<feature type="chain" id="PRO_1000024379" description="Iron-binding protein IscA">
    <location>
        <begin position="1"/>
        <end position="107"/>
    </location>
</feature>
<feature type="binding site" evidence="1">
    <location>
        <position position="35"/>
    </location>
    <ligand>
        <name>Fe cation</name>
        <dbReference type="ChEBI" id="CHEBI:24875"/>
    </ligand>
</feature>
<feature type="binding site" evidence="1">
    <location>
        <position position="99"/>
    </location>
    <ligand>
        <name>Fe cation</name>
        <dbReference type="ChEBI" id="CHEBI:24875"/>
    </ligand>
</feature>
<feature type="binding site" evidence="1">
    <location>
        <position position="101"/>
    </location>
    <ligand>
        <name>Fe cation</name>
        <dbReference type="ChEBI" id="CHEBI:24875"/>
    </ligand>
</feature>
<comment type="function">
    <text evidence="1">Is able to transfer iron-sulfur clusters to apo-ferredoxin. Multiple cycles of [2Fe2S] cluster formation and transfer are observed, suggesting that IscA acts catalytically. Recruits intracellular free iron so as to provide iron for the assembly of transient iron-sulfur cluster in IscU in the presence of IscS, L-cysteine and the thioredoxin reductase system TrxA/TrxB.</text>
</comment>
<comment type="cofactor">
    <cofactor evidence="1">
        <name>Fe cation</name>
        <dbReference type="ChEBI" id="CHEBI:24875"/>
    </cofactor>
    <text evidence="1">Binds 2 iron ions per dimer. The dimer may bind additional iron ions.</text>
</comment>
<comment type="subunit">
    <text evidence="1">Homodimer; may form tetramers and higher multimers.</text>
</comment>
<comment type="similarity">
    <text evidence="1">Belongs to the HesB/IscA family.</text>
</comment>
<protein>
    <recommendedName>
        <fullName evidence="1">Iron-binding protein IscA</fullName>
    </recommendedName>
    <alternativeName>
        <fullName evidence="1">Iron-sulfur cluster assembly protein</fullName>
    </alternativeName>
</protein>
<name>ISCA_YERE8</name>
<dbReference type="EMBL" id="AM286415">
    <property type="protein sequence ID" value="CAL11156.1"/>
    <property type="molecule type" value="Genomic_DNA"/>
</dbReference>
<dbReference type="RefSeq" id="WP_004702422.1">
    <property type="nucleotide sequence ID" value="NC_008800.1"/>
</dbReference>
<dbReference type="RefSeq" id="YP_001005391.1">
    <property type="nucleotide sequence ID" value="NC_008800.1"/>
</dbReference>
<dbReference type="SMR" id="A1JKQ4"/>
<dbReference type="GeneID" id="93969881"/>
<dbReference type="KEGG" id="yen:YE1059"/>
<dbReference type="PATRIC" id="fig|393305.7.peg.1155"/>
<dbReference type="eggNOG" id="COG0316">
    <property type="taxonomic scope" value="Bacteria"/>
</dbReference>
<dbReference type="HOGENOM" id="CLU_069054_5_1_6"/>
<dbReference type="OrthoDB" id="9801228at2"/>
<dbReference type="Proteomes" id="UP000000642">
    <property type="component" value="Chromosome"/>
</dbReference>
<dbReference type="GO" id="GO:0005829">
    <property type="term" value="C:cytosol"/>
    <property type="evidence" value="ECO:0007669"/>
    <property type="project" value="TreeGrafter"/>
</dbReference>
<dbReference type="GO" id="GO:0051537">
    <property type="term" value="F:2 iron, 2 sulfur cluster binding"/>
    <property type="evidence" value="ECO:0007669"/>
    <property type="project" value="UniProtKB-ARBA"/>
</dbReference>
<dbReference type="GO" id="GO:0005506">
    <property type="term" value="F:iron ion binding"/>
    <property type="evidence" value="ECO:0007669"/>
    <property type="project" value="UniProtKB-UniRule"/>
</dbReference>
<dbReference type="GO" id="GO:0016226">
    <property type="term" value="P:iron-sulfur cluster assembly"/>
    <property type="evidence" value="ECO:0007669"/>
    <property type="project" value="UniProtKB-UniRule"/>
</dbReference>
<dbReference type="FunFam" id="2.60.300.12:FF:000001">
    <property type="entry name" value="Iron-binding protein IscA"/>
    <property type="match status" value="1"/>
</dbReference>
<dbReference type="Gene3D" id="2.60.300.12">
    <property type="entry name" value="HesB-like domain"/>
    <property type="match status" value="1"/>
</dbReference>
<dbReference type="HAMAP" id="MF_01429">
    <property type="entry name" value="Fe_S_insert_IscA"/>
    <property type="match status" value="1"/>
</dbReference>
<dbReference type="InterPro" id="IPR050322">
    <property type="entry name" value="Fe-S_cluster_asmbl/transfer"/>
</dbReference>
<dbReference type="InterPro" id="IPR000361">
    <property type="entry name" value="FeS_biogenesis"/>
</dbReference>
<dbReference type="InterPro" id="IPR016092">
    <property type="entry name" value="FeS_cluster_insertion"/>
</dbReference>
<dbReference type="InterPro" id="IPR017870">
    <property type="entry name" value="FeS_cluster_insertion_CS"/>
</dbReference>
<dbReference type="InterPro" id="IPR035903">
    <property type="entry name" value="HesB-like_dom_sf"/>
</dbReference>
<dbReference type="InterPro" id="IPR011302">
    <property type="entry name" value="IscA_proteobacteria"/>
</dbReference>
<dbReference type="NCBIfam" id="TIGR00049">
    <property type="entry name" value="iron-sulfur cluster assembly accessory protein"/>
    <property type="match status" value="1"/>
</dbReference>
<dbReference type="NCBIfam" id="TIGR02011">
    <property type="entry name" value="IscA"/>
    <property type="match status" value="1"/>
</dbReference>
<dbReference type="NCBIfam" id="NF007049">
    <property type="entry name" value="PRK09502.1"/>
    <property type="match status" value="1"/>
</dbReference>
<dbReference type="PANTHER" id="PTHR10072:SF41">
    <property type="entry name" value="IRON-SULFUR CLUSTER ASSEMBLY 1 HOMOLOG, MITOCHONDRIAL"/>
    <property type="match status" value="1"/>
</dbReference>
<dbReference type="PANTHER" id="PTHR10072">
    <property type="entry name" value="IRON-SULFUR CLUSTER ASSEMBLY PROTEIN"/>
    <property type="match status" value="1"/>
</dbReference>
<dbReference type="Pfam" id="PF01521">
    <property type="entry name" value="Fe-S_biosyn"/>
    <property type="match status" value="1"/>
</dbReference>
<dbReference type="SUPFAM" id="SSF89360">
    <property type="entry name" value="HesB-like domain"/>
    <property type="match status" value="1"/>
</dbReference>
<dbReference type="PROSITE" id="PS01152">
    <property type="entry name" value="HESB"/>
    <property type="match status" value="1"/>
</dbReference>